<feature type="chain" id="PRO_0000397241" description="C-reactive protein P1">
    <location>
        <begin position="1"/>
        <end position="27" status="greater than"/>
    </location>
</feature>
<feature type="domain" description="Pentraxin (PTX)" evidence="3">
    <location>
        <begin position="6"/>
        <end position="27" status="greater than"/>
    </location>
</feature>
<feature type="region of interest" description="Disordered" evidence="4">
    <location>
        <begin position="1"/>
        <end position="27"/>
    </location>
</feature>
<feature type="unsure residue" evidence="6">
    <location>
        <position position="20"/>
    </location>
</feature>
<feature type="non-terminal residue" evidence="8">
    <location>
        <position position="27"/>
    </location>
</feature>
<name>CRP1_GADMO</name>
<keyword id="KW-0011">Acute phase</keyword>
<keyword id="KW-0106">Calcium</keyword>
<keyword id="KW-0903">Direct protein sequencing</keyword>
<keyword id="KW-1185">Reference proteome</keyword>
<keyword id="KW-0964">Secreted</keyword>
<reference evidence="9" key="1">
    <citation type="journal article" date="1998" name="Dev. Comp. Immunol.">
        <title>A comparative study of pentraxin-like proteins in different fish species.</title>
        <authorList>
            <person name="Lund V."/>
            <person name="Olafsen J.A."/>
        </authorList>
    </citation>
    <scope>PROTEIN SEQUENCE</scope>
    <scope>COFACTOR</scope>
    <scope>SUBUNIT</scope>
    <scope>FUNCTION</scope>
    <source>
        <tissue evidence="6">Serum</tissue>
    </source>
</reference>
<reference evidence="9" key="2">
    <citation type="journal article" date="2009" name="Fish Shellfish Immunol.">
        <title>Isolation of two C-reactive protein homologues from cod (Gadus morhua L.) serum.</title>
        <authorList>
            <person name="Gisladottir B."/>
            <person name="Gudmundsdottir S."/>
            <person name="Brown L."/>
            <person name="Jonsson Z.O."/>
            <person name="Magnadottir B."/>
        </authorList>
    </citation>
    <scope>PROTEIN SEQUENCE OF 1-15</scope>
    <scope>FUNCTION</scope>
    <scope>SUBUNIT</scope>
    <scope>SUBCELLULAR LOCATION</scope>
    <scope>GLYCOSYLATION</scope>
    <scope>IDENTIFICATION BY MASS SPECTROMETRY</scope>
    <source>
        <tissue evidence="5">Serum</tissue>
    </source>
</reference>
<evidence type="ECO:0000250" key="1">
    <source>
        <dbReference type="UniProtKB" id="P02741"/>
    </source>
</evidence>
<evidence type="ECO:0000255" key="2"/>
<evidence type="ECO:0000255" key="3">
    <source>
        <dbReference type="PROSITE-ProRule" id="PRU01172"/>
    </source>
</evidence>
<evidence type="ECO:0000256" key="4">
    <source>
        <dbReference type="SAM" id="MobiDB-lite"/>
    </source>
</evidence>
<evidence type="ECO:0000269" key="5">
    <source>
    </source>
</evidence>
<evidence type="ECO:0000269" key="6">
    <source>
    </source>
</evidence>
<evidence type="ECO:0000303" key="7">
    <source>
    </source>
</evidence>
<evidence type="ECO:0000303" key="8">
    <source>
    </source>
</evidence>
<evidence type="ECO:0000305" key="9"/>
<proteinExistence type="evidence at protein level"/>
<organism>
    <name type="scientific">Gadus morhua</name>
    <name type="common">Atlantic cod</name>
    <dbReference type="NCBI Taxonomy" id="8049"/>
    <lineage>
        <taxon>Eukaryota</taxon>
        <taxon>Metazoa</taxon>
        <taxon>Chordata</taxon>
        <taxon>Craniata</taxon>
        <taxon>Vertebrata</taxon>
        <taxon>Euteleostomi</taxon>
        <taxon>Actinopterygii</taxon>
        <taxon>Neopterygii</taxon>
        <taxon>Teleostei</taxon>
        <taxon>Neoteleostei</taxon>
        <taxon>Acanthomorphata</taxon>
        <taxon>Zeiogadaria</taxon>
        <taxon>Gadariae</taxon>
        <taxon>Gadiformes</taxon>
        <taxon>Gadoidei</taxon>
        <taxon>Gadidae</taxon>
        <taxon>Gadus</taxon>
    </lineage>
</organism>
<accession>P86688</accession>
<comment type="function">
    <text evidence="1 5 6">Displays several functions associated with host defense: it promotes agglutination, bacterial capsular swelling, phagocytosis, and complement fixation through its calcium-dependent binding to phosphorylcholine.</text>
</comment>
<comment type="cofactor">
    <cofactor evidence="1 6">
        <name>Ca(2+)</name>
        <dbReference type="ChEBI" id="CHEBI:29108"/>
    </cofactor>
    <text evidence="1 6">Binds 2 calcium ions per subunit.</text>
</comment>
<comment type="subunit">
    <text evidence="1 5 6">Homopentamer. Pentraxin (or pentaxin) have a discoid arrangement of 5 non-covalently bound subunits. Exists as a dimer under reducing conditions.</text>
</comment>
<comment type="subcellular location">
    <subcellularLocation>
        <location evidence="5 6">Secreted</location>
    </subcellularLocation>
</comment>
<comment type="PTM">
    <text evidence="5">Glycosylated.</text>
</comment>
<comment type="miscellaneous">
    <text evidence="5">Shows sequence similarity to serum amyloid P-component-type pentraxins but binds to phosphatidylcholine.</text>
</comment>
<comment type="similarity">
    <text evidence="2">Belongs to the pentraxin family.</text>
</comment>
<sequence length="27" mass="3092">IPQDLSGKMLTFPKEEDDDDVKLMTPK</sequence>
<protein>
    <recommendedName>
        <fullName>C-reactive protein P1</fullName>
    </recommendedName>
    <alternativeName>
        <fullName evidence="7">C-reactive protein PI</fullName>
    </alternativeName>
    <alternativeName>
        <fullName evidence="8">Phosphatidylcholine-binding protein</fullName>
        <shortName evidence="8">Gm-PCBP</shortName>
    </alternativeName>
</protein>
<dbReference type="STRING" id="8049.ENSGMOP00000008564"/>
<dbReference type="Proteomes" id="UP000694546">
    <property type="component" value="Unplaced"/>
</dbReference>
<dbReference type="GO" id="GO:0005576">
    <property type="term" value="C:extracellular region"/>
    <property type="evidence" value="ECO:0007669"/>
    <property type="project" value="UniProtKB-SubCell"/>
</dbReference>
<dbReference type="GO" id="GO:0006953">
    <property type="term" value="P:acute-phase response"/>
    <property type="evidence" value="ECO:0007669"/>
    <property type="project" value="UniProtKB-KW"/>
</dbReference>
<dbReference type="InterPro" id="IPR001759">
    <property type="entry name" value="Pentraxin-related"/>
</dbReference>
<dbReference type="PROSITE" id="PS51828">
    <property type="entry name" value="PTX_2"/>
    <property type="match status" value="1"/>
</dbReference>